<reference key="1">
    <citation type="journal article" date="2009" name="PLoS ONE">
        <title>Genome degradation in Brucella ovis corresponds with narrowing of its host range and tissue tropism.</title>
        <authorList>
            <person name="Tsolis R.M."/>
            <person name="Seshadri R."/>
            <person name="Santos R.L."/>
            <person name="Sangari F.J."/>
            <person name="Lobo J.M."/>
            <person name="de Jong M.F."/>
            <person name="Ren Q."/>
            <person name="Myers G."/>
            <person name="Brinkac L.M."/>
            <person name="Nelson W.C."/>
            <person name="Deboy R.T."/>
            <person name="Angiuoli S."/>
            <person name="Khouri H."/>
            <person name="Dimitrov G."/>
            <person name="Robinson J.R."/>
            <person name="Mulligan S."/>
            <person name="Walker R.L."/>
            <person name="Elzer P.E."/>
            <person name="Hassan K.A."/>
            <person name="Paulsen I.T."/>
        </authorList>
    </citation>
    <scope>NUCLEOTIDE SEQUENCE [LARGE SCALE GENOMIC DNA]</scope>
    <source>
        <strain>ATCC 25840 / 63/290 / NCTC 10512</strain>
    </source>
</reference>
<comment type="function">
    <text evidence="1">This is one of the proteins that bind and probably mediate the attachment of the 5S RNA into the large ribosomal subunit, where it forms part of the central protuberance.</text>
</comment>
<comment type="subunit">
    <text evidence="1">Part of the 50S ribosomal subunit; part of the 5S rRNA/L5/L18/L25 subcomplex. Contacts the 5S and 23S rRNAs.</text>
</comment>
<comment type="similarity">
    <text evidence="1">Belongs to the universal ribosomal protein uL18 family.</text>
</comment>
<sequence length="120" mass="12669">MASPKETLQRRAARVRRQVKAVANGRPRLSVHRSSKNIYAQIIDDVRGVTLAAASTLDGDLKGKLKTGADSAAAAAVGKLVAERAVKAGVKDVVFDRGAFIYHGRVKALAEAAREGGLSF</sequence>
<gene>
    <name evidence="1" type="primary">rplR</name>
    <name type="ordered locus">BOV_1180</name>
</gene>
<protein>
    <recommendedName>
        <fullName evidence="1">Large ribosomal subunit protein uL18</fullName>
    </recommendedName>
    <alternativeName>
        <fullName evidence="2">50S ribosomal protein L18</fullName>
    </alternativeName>
</protein>
<dbReference type="EMBL" id="CP000708">
    <property type="protein sequence ID" value="ABQ61191.1"/>
    <property type="molecule type" value="Genomic_DNA"/>
</dbReference>
<dbReference type="RefSeq" id="WP_002964346.1">
    <property type="nucleotide sequence ID" value="NC_009505.1"/>
</dbReference>
<dbReference type="SMR" id="A5VQZ0"/>
<dbReference type="GeneID" id="97533540"/>
<dbReference type="KEGG" id="bov:BOV_1180"/>
<dbReference type="HOGENOM" id="CLU_098841_0_1_5"/>
<dbReference type="PhylomeDB" id="A5VQZ0"/>
<dbReference type="Proteomes" id="UP000006383">
    <property type="component" value="Chromosome I"/>
</dbReference>
<dbReference type="GO" id="GO:0022625">
    <property type="term" value="C:cytosolic large ribosomal subunit"/>
    <property type="evidence" value="ECO:0007669"/>
    <property type="project" value="TreeGrafter"/>
</dbReference>
<dbReference type="GO" id="GO:0008097">
    <property type="term" value="F:5S rRNA binding"/>
    <property type="evidence" value="ECO:0007669"/>
    <property type="project" value="TreeGrafter"/>
</dbReference>
<dbReference type="GO" id="GO:0003735">
    <property type="term" value="F:structural constituent of ribosome"/>
    <property type="evidence" value="ECO:0007669"/>
    <property type="project" value="InterPro"/>
</dbReference>
<dbReference type="GO" id="GO:0006412">
    <property type="term" value="P:translation"/>
    <property type="evidence" value="ECO:0007669"/>
    <property type="project" value="UniProtKB-UniRule"/>
</dbReference>
<dbReference type="CDD" id="cd00432">
    <property type="entry name" value="Ribosomal_L18_L5e"/>
    <property type="match status" value="1"/>
</dbReference>
<dbReference type="FunFam" id="3.30.420.100:FF:000001">
    <property type="entry name" value="50S ribosomal protein L18"/>
    <property type="match status" value="1"/>
</dbReference>
<dbReference type="Gene3D" id="3.30.420.100">
    <property type="match status" value="1"/>
</dbReference>
<dbReference type="HAMAP" id="MF_01337_B">
    <property type="entry name" value="Ribosomal_uL18_B"/>
    <property type="match status" value="1"/>
</dbReference>
<dbReference type="InterPro" id="IPR004389">
    <property type="entry name" value="Ribosomal_uL18_bac-type"/>
</dbReference>
<dbReference type="InterPro" id="IPR005484">
    <property type="entry name" value="Ribosomal_uL18_bac/euk"/>
</dbReference>
<dbReference type="NCBIfam" id="TIGR00060">
    <property type="entry name" value="L18_bact"/>
    <property type="match status" value="1"/>
</dbReference>
<dbReference type="PANTHER" id="PTHR12899">
    <property type="entry name" value="39S RIBOSOMAL PROTEIN L18, MITOCHONDRIAL"/>
    <property type="match status" value="1"/>
</dbReference>
<dbReference type="PANTHER" id="PTHR12899:SF3">
    <property type="entry name" value="LARGE RIBOSOMAL SUBUNIT PROTEIN UL18M"/>
    <property type="match status" value="1"/>
</dbReference>
<dbReference type="Pfam" id="PF00861">
    <property type="entry name" value="Ribosomal_L18p"/>
    <property type="match status" value="1"/>
</dbReference>
<dbReference type="SUPFAM" id="SSF53137">
    <property type="entry name" value="Translational machinery components"/>
    <property type="match status" value="1"/>
</dbReference>
<keyword id="KW-0687">Ribonucleoprotein</keyword>
<keyword id="KW-0689">Ribosomal protein</keyword>
<keyword id="KW-0694">RNA-binding</keyword>
<keyword id="KW-0699">rRNA-binding</keyword>
<accession>A5VQZ0</accession>
<proteinExistence type="inferred from homology"/>
<feature type="chain" id="PRO_1000052994" description="Large ribosomal subunit protein uL18">
    <location>
        <begin position="1"/>
        <end position="120"/>
    </location>
</feature>
<evidence type="ECO:0000255" key="1">
    <source>
        <dbReference type="HAMAP-Rule" id="MF_01337"/>
    </source>
</evidence>
<evidence type="ECO:0000305" key="2"/>
<organism>
    <name type="scientific">Brucella ovis (strain ATCC 25840 / 63/290 / NCTC 10512)</name>
    <dbReference type="NCBI Taxonomy" id="444178"/>
    <lineage>
        <taxon>Bacteria</taxon>
        <taxon>Pseudomonadati</taxon>
        <taxon>Pseudomonadota</taxon>
        <taxon>Alphaproteobacteria</taxon>
        <taxon>Hyphomicrobiales</taxon>
        <taxon>Brucellaceae</taxon>
        <taxon>Brucella/Ochrobactrum group</taxon>
        <taxon>Brucella</taxon>
    </lineage>
</organism>
<name>RL18_BRUO2</name>